<proteinExistence type="evidence at protein level"/>
<comment type="function">
    <text evidence="1">An RbcL-specific chaperone. The central cleft of the RbcX homodimer (RbcX2) binds the C-terminus of an RbcL monomer, stabilizing the C-terminus and probably preventing its reassociation with chaperonin GroEL-ES. At the same time the peripheral region of RbcX2 binds a second RbcL monomer, bridging the RbcL homodimers in the correct orientation. The RbcX2(2)-bound RbcL dimers then assemble into the RbcL8 core (RbcL8-(RbcX2)8). RbcS binding triggers the release of RbcX2.</text>
</comment>
<comment type="function">
    <text evidence="4 5">When rbcL-rbcX-rbcS or rbcL-rbcS were overexpressed in E.coli no change in reconstituted RuBisCO activity was observed, which suggests RbcX plays no role in RuBisCO assembly in this system (PubMed:8472962). However in PubMed:8472962 E.coli chaperones groL and groS were also overexpressed, which may compensate for lack of rbcX (Probable).</text>
</comment>
<comment type="subunit">
    <text evidence="1 3">Homodimer. Interacts with the exposed C-terminal peptide of RbcL via its central cleft, contacts a second RbcL monomer via its peripheral polar surface (By similarity). RbcX and Raf1 can bind simultaneously to RbcL (PubMed:32451445).</text>
</comment>
<comment type="subcellular location">
    <subcellularLocation>
        <location evidence="1">Carboxysome</location>
    </subcellularLocation>
    <subcellularLocation>
        <location evidence="1">Cytoplasm</location>
    </subcellularLocation>
    <text evidence="1">Most protein is cytoplasmic, but some is in the carboxysome.</text>
</comment>
<comment type="domain">
    <text evidence="1">The homodimer has 2 functional domains, a central cleft essential for production of soluble RbcL in which the RbcL peptide binds, and a polar surface which plays a role in correct RbcL subunit arrangement.</text>
</comment>
<comment type="similarity">
    <text evidence="1">Belongs to the RbcX family.</text>
</comment>
<reference key="1">
    <citation type="journal article" date="2001" name="DNA Res.">
        <title>Complete genomic sequence of the filamentous nitrogen-fixing cyanobacterium Anabaena sp. strain PCC 7120.</title>
        <authorList>
            <person name="Kaneko T."/>
            <person name="Nakamura Y."/>
            <person name="Wolk C.P."/>
            <person name="Kuritz T."/>
            <person name="Sasamoto S."/>
            <person name="Watanabe A."/>
            <person name="Iriguchi M."/>
            <person name="Ishikawa A."/>
            <person name="Kawashima K."/>
            <person name="Kimura T."/>
            <person name="Kishida Y."/>
            <person name="Kohara M."/>
            <person name="Matsumoto M."/>
            <person name="Matsuno A."/>
            <person name="Muraki A."/>
            <person name="Nakazaki N."/>
            <person name="Shimpo S."/>
            <person name="Sugimoto M."/>
            <person name="Takazawa M."/>
            <person name="Yamada M."/>
            <person name="Yasuda M."/>
            <person name="Tabata S."/>
        </authorList>
    </citation>
    <scope>NUCLEOTIDE SEQUENCE [LARGE SCALE GENOMIC DNA]</scope>
    <source>
        <strain>PCC 7120 / SAG 25.82 / UTEX 2576</strain>
    </source>
</reference>
<reference key="2">
    <citation type="journal article" date="1993" name="Gene">
        <title>Overproduction of Anabaena 7120 ribulose-bisphosphate carboxylase/oxygenase in Escherichia coli.</title>
        <authorList>
            <person name="Larimer F.W."/>
            <person name="Soper T.S."/>
        </authorList>
    </citation>
    <scope>FUNCTION IN E.COLI</scope>
    <source>
        <strain>PCC 7120 / SAG 25.82 / UTEX 2576</strain>
    </source>
</reference>
<reference key="3">
    <citation type="journal article" date="2004" name="Plant Cell Physiol.">
        <title>The rbcX gene product promotes the production and assembly of ribulose-1,5-bisphosphate carboxylase/oxygenase of Synechococcus sp. PCC7002 in Escherichia coli.</title>
        <authorList>
            <person name="Onizuka T."/>
            <person name="Endo S."/>
            <person name="Akiyama H."/>
            <person name="Kanai S."/>
            <person name="Hirano M."/>
            <person name="Yokota A."/>
            <person name="Tanaka S."/>
            <person name="Miyasaka H."/>
        </authorList>
    </citation>
    <scope>DISCUSSION OF FUNCTION</scope>
</reference>
<reference key="4">
    <citation type="journal article" date="2020" name="Nat. Plants">
        <title>Molecular basis for the assembly of RuBisCO assisted by the chaperone Raf1.</title>
        <authorList>
            <person name="Xia L.Y."/>
            <person name="Jiang Y.L."/>
            <person name="Kong W.W."/>
            <person name="Sun H."/>
            <person name="Li W.F."/>
            <person name="Chen Y."/>
            <person name="Zhou C.Z."/>
        </authorList>
    </citation>
    <scope>FUNCTION</scope>
    <scope>SUBUNIT</scope>
    <source>
        <strain>PCC 7120 / SAG 25.82 / UTEX 2576</strain>
    </source>
</reference>
<evidence type="ECO:0000255" key="1">
    <source>
        <dbReference type="HAMAP-Rule" id="MF_00855"/>
    </source>
</evidence>
<evidence type="ECO:0000256" key="2">
    <source>
        <dbReference type="SAM" id="MobiDB-lite"/>
    </source>
</evidence>
<evidence type="ECO:0000269" key="3">
    <source>
    </source>
</evidence>
<evidence type="ECO:0000269" key="4">
    <source>
    </source>
</evidence>
<evidence type="ECO:0000305" key="5">
    <source>
    </source>
</evidence>
<evidence type="ECO:0007829" key="6">
    <source>
        <dbReference type="PDB" id="7XSD"/>
    </source>
</evidence>
<feature type="chain" id="PRO_0000451582" description="RuBisCO chaperone RbcX">
    <location>
        <begin position="1"/>
        <end position="132"/>
    </location>
</feature>
<feature type="region of interest" description="Disordered" evidence="2">
    <location>
        <begin position="110"/>
        <end position="132"/>
    </location>
</feature>
<feature type="compositionally biased region" description="Polar residues" evidence="2">
    <location>
        <begin position="111"/>
        <end position="132"/>
    </location>
</feature>
<feature type="helix" evidence="6">
    <location>
        <begin position="5"/>
        <end position="29"/>
    </location>
</feature>
<feature type="turn" evidence="6">
    <location>
        <begin position="30"/>
        <end position="32"/>
    </location>
</feature>
<feature type="helix" evidence="6">
    <location>
        <begin position="35"/>
        <end position="37"/>
    </location>
</feature>
<feature type="helix" evidence="6">
    <location>
        <begin position="54"/>
        <end position="59"/>
    </location>
</feature>
<feature type="helix" evidence="6">
    <location>
        <begin position="66"/>
        <end position="78"/>
    </location>
</feature>
<feature type="turn" evidence="6">
    <location>
        <begin position="82"/>
        <end position="84"/>
    </location>
</feature>
<feature type="helix" evidence="6">
    <location>
        <begin position="85"/>
        <end position="101"/>
    </location>
</feature>
<feature type="helix" evidence="6">
    <location>
        <begin position="103"/>
        <end position="111"/>
    </location>
</feature>
<gene>
    <name evidence="1" type="primary">rbcX</name>
    <name type="ordered locus">alr1525</name>
</gene>
<name>RBCX_NOSS1</name>
<sequence>MNLKQIAKDTAKTLQSYLTYQALMTVLAQLGETNPPLALWLHTFSVGKVQDGEAYVKELFREQPDLALRIMTVREHIAEEVAEFLPEMVRSGIQQANMEQRRQHLERMTHLSLSNPSPESEQQTISDTDWDH</sequence>
<keyword id="KW-0002">3D-structure</keyword>
<keyword id="KW-1283">Bacterial microcompartment</keyword>
<keyword id="KW-0120">Carbon dioxide fixation</keyword>
<keyword id="KW-1282">Carboxysome</keyword>
<keyword id="KW-0143">Chaperone</keyword>
<keyword id="KW-0963">Cytoplasm</keyword>
<keyword id="KW-0602">Photosynthesis</keyword>
<keyword id="KW-1185">Reference proteome</keyword>
<accession>O86418</accession>
<dbReference type="EMBL" id="BA000019">
    <property type="protein sequence ID" value="BAB77891.1"/>
    <property type="molecule type" value="Genomic_DNA"/>
</dbReference>
<dbReference type="PIR" id="AG1996">
    <property type="entry name" value="AG1996"/>
</dbReference>
<dbReference type="PDB" id="7XSD">
    <property type="method" value="EM"/>
    <property type="resolution" value="3.30 A"/>
    <property type="chains" value="1/2/3/4/5/6/7/8/Q/R/S/T/U/V/W/X=1-132"/>
</dbReference>
<dbReference type="PDBsum" id="7XSD"/>
<dbReference type="SMR" id="O86418"/>
<dbReference type="STRING" id="103690.gene:10493538"/>
<dbReference type="KEGG" id="ana:alr1525"/>
<dbReference type="eggNOG" id="ENOG50315SX">
    <property type="taxonomic scope" value="Bacteria"/>
</dbReference>
<dbReference type="OrthoDB" id="512484at2"/>
<dbReference type="Proteomes" id="UP000002483">
    <property type="component" value="Chromosome"/>
</dbReference>
<dbReference type="GO" id="GO:0031470">
    <property type="term" value="C:carboxysome"/>
    <property type="evidence" value="ECO:0007669"/>
    <property type="project" value="UniProtKB-SubCell"/>
</dbReference>
<dbReference type="GO" id="GO:0005737">
    <property type="term" value="C:cytoplasm"/>
    <property type="evidence" value="ECO:0007669"/>
    <property type="project" value="UniProtKB-SubCell"/>
</dbReference>
<dbReference type="GO" id="GO:0044183">
    <property type="term" value="F:protein folding chaperone"/>
    <property type="evidence" value="ECO:0007669"/>
    <property type="project" value="InterPro"/>
</dbReference>
<dbReference type="GO" id="GO:0015977">
    <property type="term" value="P:carbon fixation"/>
    <property type="evidence" value="ECO:0007669"/>
    <property type="project" value="UniProtKB-UniRule"/>
</dbReference>
<dbReference type="GO" id="GO:0015979">
    <property type="term" value="P:photosynthesis"/>
    <property type="evidence" value="ECO:0007669"/>
    <property type="project" value="UniProtKB-KW"/>
</dbReference>
<dbReference type="GO" id="GO:0110102">
    <property type="term" value="P:ribulose bisphosphate carboxylase complex assembly"/>
    <property type="evidence" value="ECO:0007669"/>
    <property type="project" value="UniProtKB-UniRule"/>
</dbReference>
<dbReference type="Gene3D" id="1.10.1200.210">
    <property type="entry name" value="Chaperonin-like RbcX"/>
    <property type="match status" value="1"/>
</dbReference>
<dbReference type="HAMAP" id="MF_00855">
    <property type="entry name" value="RbcX"/>
    <property type="match status" value="1"/>
</dbReference>
<dbReference type="InterPro" id="IPR038052">
    <property type="entry name" value="Chaperonin_RbcX_sf"/>
</dbReference>
<dbReference type="InterPro" id="IPR003435">
    <property type="entry name" value="Chaperonin_RcbX"/>
</dbReference>
<dbReference type="InterPro" id="IPR046381">
    <property type="entry name" value="RbcX"/>
</dbReference>
<dbReference type="NCBIfam" id="NF047598">
    <property type="entry name" value="ChaprRbcXCyano"/>
    <property type="match status" value="1"/>
</dbReference>
<dbReference type="PANTHER" id="PTHR33791">
    <property type="entry name" value="CHAPERONIN-LIKE RBCX PROTEIN 1, CHLOROPLASTIC"/>
    <property type="match status" value="1"/>
</dbReference>
<dbReference type="PANTHER" id="PTHR33791:SF1">
    <property type="entry name" value="RUBISCO CHAPERONE RBCX"/>
    <property type="match status" value="1"/>
</dbReference>
<dbReference type="Pfam" id="PF02341">
    <property type="entry name" value="RbcX"/>
    <property type="match status" value="1"/>
</dbReference>
<dbReference type="SUPFAM" id="SSF158615">
    <property type="entry name" value="RbcX-like"/>
    <property type="match status" value="1"/>
</dbReference>
<protein>
    <recommendedName>
        <fullName evidence="1">RuBisCO chaperone RbcX</fullName>
    </recommendedName>
</protein>
<organism>
    <name type="scientific">Nostoc sp. (strain PCC 7120 / SAG 25.82 / UTEX 2576)</name>
    <dbReference type="NCBI Taxonomy" id="103690"/>
    <lineage>
        <taxon>Bacteria</taxon>
        <taxon>Bacillati</taxon>
        <taxon>Cyanobacteriota</taxon>
        <taxon>Cyanophyceae</taxon>
        <taxon>Nostocales</taxon>
        <taxon>Nostocaceae</taxon>
        <taxon>Nostoc</taxon>
    </lineage>
</organism>